<evidence type="ECO:0000255" key="1">
    <source>
        <dbReference type="HAMAP-Rule" id="MF_01342"/>
    </source>
</evidence>
<evidence type="ECO:0000256" key="2">
    <source>
        <dbReference type="SAM" id="MobiDB-lite"/>
    </source>
</evidence>
<evidence type="ECO:0000305" key="3"/>
<sequence length="135" mass="15375">MLSPKRTKFRKQHRNRMNGKASKGNTIAFGEYALQTLEPVWLTARQIEATRRTITRYVKRGGKIWIRVFPDKPITARPAETRMGSGKGATEYWVAVIKPGHILFEIAGVSKQTAQEAMKLASYKLPIKTKFITKQ</sequence>
<gene>
    <name evidence="1" type="primary">rpl16</name>
</gene>
<feature type="chain" id="PRO_0000062283" description="Large ribosomal subunit protein uL16c">
    <location>
        <begin position="1"/>
        <end position="135"/>
    </location>
</feature>
<feature type="region of interest" description="Disordered" evidence="2">
    <location>
        <begin position="1"/>
        <end position="22"/>
    </location>
</feature>
<feature type="compositionally biased region" description="Basic residues" evidence="2">
    <location>
        <begin position="1"/>
        <end position="17"/>
    </location>
</feature>
<name>RK16_GRATE</name>
<comment type="subunit">
    <text>Part of the 50S ribosomal subunit.</text>
</comment>
<comment type="subcellular location">
    <subcellularLocation>
        <location>Plastid</location>
        <location>Chloroplast</location>
    </subcellularLocation>
</comment>
<comment type="similarity">
    <text evidence="1">Belongs to the universal ribosomal protein uL16 family.</text>
</comment>
<geneLocation type="chloroplast"/>
<keyword id="KW-0150">Chloroplast</keyword>
<keyword id="KW-0934">Plastid</keyword>
<keyword id="KW-0687">Ribonucleoprotein</keyword>
<keyword id="KW-0689">Ribosomal protein</keyword>
<reference key="1">
    <citation type="journal article" date="1990" name="Gene">
        <title>Cloning and characterization of chloroplast ribosomal protein-encoding genes, rpl16 and rps3, of the marine macro-algae, Gracilaria tenuistipitata.</title>
        <authorList>
            <person name="Kao J.-S."/>
            <person name="Wu M."/>
            <person name="Chiang Y.-M."/>
        </authorList>
    </citation>
    <scope>NUCLEOTIDE SEQUENCE [GENOMIC DNA]</scope>
</reference>
<protein>
    <recommendedName>
        <fullName evidence="1">Large ribosomal subunit protein uL16c</fullName>
    </recommendedName>
    <alternativeName>
        <fullName evidence="3">50S ribosomal protein L16, chloroplastic</fullName>
    </alternativeName>
</protein>
<dbReference type="EMBL" id="M32638">
    <property type="protein sequence ID" value="AAA84293.1"/>
    <property type="molecule type" value="Genomic_DNA"/>
</dbReference>
<dbReference type="PIR" id="JH0188">
    <property type="entry name" value="JH0188"/>
</dbReference>
<dbReference type="SMR" id="P16633"/>
<dbReference type="GO" id="GO:0009507">
    <property type="term" value="C:chloroplast"/>
    <property type="evidence" value="ECO:0007669"/>
    <property type="project" value="UniProtKB-SubCell"/>
</dbReference>
<dbReference type="GO" id="GO:0005762">
    <property type="term" value="C:mitochondrial large ribosomal subunit"/>
    <property type="evidence" value="ECO:0007669"/>
    <property type="project" value="TreeGrafter"/>
</dbReference>
<dbReference type="GO" id="GO:0019843">
    <property type="term" value="F:rRNA binding"/>
    <property type="evidence" value="ECO:0007669"/>
    <property type="project" value="InterPro"/>
</dbReference>
<dbReference type="GO" id="GO:0003735">
    <property type="term" value="F:structural constituent of ribosome"/>
    <property type="evidence" value="ECO:0007669"/>
    <property type="project" value="InterPro"/>
</dbReference>
<dbReference type="GO" id="GO:0032543">
    <property type="term" value="P:mitochondrial translation"/>
    <property type="evidence" value="ECO:0007669"/>
    <property type="project" value="TreeGrafter"/>
</dbReference>
<dbReference type="CDD" id="cd01433">
    <property type="entry name" value="Ribosomal_L16_L10e"/>
    <property type="match status" value="1"/>
</dbReference>
<dbReference type="FunFam" id="3.90.1170.10:FF:000001">
    <property type="entry name" value="50S ribosomal protein L16"/>
    <property type="match status" value="1"/>
</dbReference>
<dbReference type="Gene3D" id="3.90.1170.10">
    <property type="entry name" value="Ribosomal protein L10e/L16"/>
    <property type="match status" value="1"/>
</dbReference>
<dbReference type="HAMAP" id="MF_01342">
    <property type="entry name" value="Ribosomal_uL16"/>
    <property type="match status" value="1"/>
</dbReference>
<dbReference type="InterPro" id="IPR047873">
    <property type="entry name" value="Ribosomal_uL16"/>
</dbReference>
<dbReference type="InterPro" id="IPR000114">
    <property type="entry name" value="Ribosomal_uL16_bact-type"/>
</dbReference>
<dbReference type="InterPro" id="IPR020798">
    <property type="entry name" value="Ribosomal_uL16_CS"/>
</dbReference>
<dbReference type="InterPro" id="IPR016180">
    <property type="entry name" value="Ribosomal_uL16_dom"/>
</dbReference>
<dbReference type="InterPro" id="IPR036920">
    <property type="entry name" value="Ribosomal_uL16_sf"/>
</dbReference>
<dbReference type="NCBIfam" id="TIGR01164">
    <property type="entry name" value="rplP_bact"/>
    <property type="match status" value="1"/>
</dbReference>
<dbReference type="PANTHER" id="PTHR12220">
    <property type="entry name" value="50S/60S RIBOSOMAL PROTEIN L16"/>
    <property type="match status" value="1"/>
</dbReference>
<dbReference type="PANTHER" id="PTHR12220:SF13">
    <property type="entry name" value="LARGE RIBOSOMAL SUBUNIT PROTEIN UL16M"/>
    <property type="match status" value="1"/>
</dbReference>
<dbReference type="Pfam" id="PF00252">
    <property type="entry name" value="Ribosomal_L16"/>
    <property type="match status" value="1"/>
</dbReference>
<dbReference type="PRINTS" id="PR00060">
    <property type="entry name" value="RIBOSOMALL16"/>
</dbReference>
<dbReference type="SUPFAM" id="SSF54686">
    <property type="entry name" value="Ribosomal protein L16p/L10e"/>
    <property type="match status" value="1"/>
</dbReference>
<dbReference type="PROSITE" id="PS00586">
    <property type="entry name" value="RIBOSOMAL_L16_1"/>
    <property type="match status" value="1"/>
</dbReference>
<dbReference type="PROSITE" id="PS00701">
    <property type="entry name" value="RIBOSOMAL_L16_2"/>
    <property type="match status" value="1"/>
</dbReference>
<organism>
    <name type="scientific">Gracilaria tenuistipitata</name>
    <name type="common">Red alga</name>
    <name type="synonym">Agarophyton tenuistipitatum</name>
    <dbReference type="NCBI Taxonomy" id="2510778"/>
    <lineage>
        <taxon>Eukaryota</taxon>
        <taxon>Rhodophyta</taxon>
        <taxon>Florideophyceae</taxon>
        <taxon>Rhodymeniophycidae</taxon>
        <taxon>Gracilariales</taxon>
        <taxon>Gracilariaceae</taxon>
        <taxon>Gracilaria</taxon>
    </lineage>
</organism>
<accession>P16633</accession>
<proteinExistence type="inferred from homology"/>